<feature type="chain" id="PRO_0000405354" description="Probable tyrosine phosphatase protein H4">
    <location>
        <begin position="1"/>
        <end position="182"/>
    </location>
</feature>
<feature type="domain" description="Tyrosine-protein phosphatase" evidence="1">
    <location>
        <begin position="1"/>
        <end position="182"/>
    </location>
</feature>
<feature type="active site" description="Phosphocysteine intermediate" evidence="1 2">
    <location>
        <position position="142"/>
    </location>
</feature>
<name>PTPH4_MDBVW</name>
<dbReference type="EC" id="3.1.3.48"/>
<dbReference type="EMBL" id="AY875685">
    <property type="protein sequence ID" value="AAW51790.1"/>
    <property type="molecule type" value="Genomic_DNA"/>
</dbReference>
<dbReference type="RefSeq" id="YP_239385.1">
    <property type="nucleotide sequence ID" value="NC_007035.1"/>
</dbReference>
<dbReference type="SMR" id="Q5I143"/>
<dbReference type="KEGG" id="vg:5075817"/>
<dbReference type="Proteomes" id="UP000008168">
    <property type="component" value="Genome"/>
</dbReference>
<dbReference type="GO" id="GO:0004725">
    <property type="term" value="F:protein tyrosine phosphatase activity"/>
    <property type="evidence" value="ECO:0007669"/>
    <property type="project" value="UniProtKB-EC"/>
</dbReference>
<dbReference type="CDD" id="cd00047">
    <property type="entry name" value="PTPc"/>
    <property type="match status" value="1"/>
</dbReference>
<dbReference type="Gene3D" id="3.90.190.10">
    <property type="entry name" value="Protein tyrosine phosphatase superfamily"/>
    <property type="match status" value="1"/>
</dbReference>
<dbReference type="InterPro" id="IPR029021">
    <property type="entry name" value="Prot-tyrosine_phosphatase-like"/>
</dbReference>
<dbReference type="InterPro" id="IPR050348">
    <property type="entry name" value="Protein-Tyr_Phosphatase"/>
</dbReference>
<dbReference type="InterPro" id="IPR000242">
    <property type="entry name" value="PTP_cat"/>
</dbReference>
<dbReference type="InterPro" id="IPR016130">
    <property type="entry name" value="Tyr_Pase_AS"/>
</dbReference>
<dbReference type="InterPro" id="IPR003595">
    <property type="entry name" value="Tyr_Pase_cat"/>
</dbReference>
<dbReference type="InterPro" id="IPR000387">
    <property type="entry name" value="Tyr_Pase_dom"/>
</dbReference>
<dbReference type="PANTHER" id="PTHR19134">
    <property type="entry name" value="RECEPTOR-TYPE TYROSINE-PROTEIN PHOSPHATASE"/>
    <property type="match status" value="1"/>
</dbReference>
<dbReference type="PANTHER" id="PTHR19134:SF449">
    <property type="entry name" value="TYROSINE-PROTEIN PHOSPHATASE 1"/>
    <property type="match status" value="1"/>
</dbReference>
<dbReference type="Pfam" id="PF00102">
    <property type="entry name" value="Y_phosphatase"/>
    <property type="match status" value="1"/>
</dbReference>
<dbReference type="PRINTS" id="PR00700">
    <property type="entry name" value="PRTYPHPHTASE"/>
</dbReference>
<dbReference type="SMART" id="SM00194">
    <property type="entry name" value="PTPc"/>
    <property type="match status" value="1"/>
</dbReference>
<dbReference type="SMART" id="SM00404">
    <property type="entry name" value="PTPc_motif"/>
    <property type="match status" value="1"/>
</dbReference>
<dbReference type="SUPFAM" id="SSF52799">
    <property type="entry name" value="(Phosphotyrosine protein) phosphatases II"/>
    <property type="match status" value="1"/>
</dbReference>
<dbReference type="PROSITE" id="PS00383">
    <property type="entry name" value="TYR_PHOSPHATASE_1"/>
    <property type="match status" value="1"/>
</dbReference>
<dbReference type="PROSITE" id="PS50056">
    <property type="entry name" value="TYR_PHOSPHATASE_2"/>
    <property type="match status" value="1"/>
</dbReference>
<dbReference type="PROSITE" id="PS50055">
    <property type="entry name" value="TYR_PHOSPHATASE_PTP"/>
    <property type="match status" value="1"/>
</dbReference>
<comment type="catalytic activity">
    <reaction evidence="2">
        <text>O-phospho-L-tyrosyl-[protein] + H2O = L-tyrosyl-[protein] + phosphate</text>
        <dbReference type="Rhea" id="RHEA:10684"/>
        <dbReference type="Rhea" id="RHEA-COMP:10136"/>
        <dbReference type="Rhea" id="RHEA-COMP:20101"/>
        <dbReference type="ChEBI" id="CHEBI:15377"/>
        <dbReference type="ChEBI" id="CHEBI:43474"/>
        <dbReference type="ChEBI" id="CHEBI:46858"/>
        <dbReference type="ChEBI" id="CHEBI:61978"/>
        <dbReference type="EC" id="3.1.3.48"/>
    </reaction>
</comment>
<comment type="similarity">
    <text evidence="3">Belongs to the protein-tyrosine phosphatase family.</text>
</comment>
<organismHost>
    <name type="scientific">Microplitis demolitor</name>
    <name type="common">Parasitoid wasp</name>
    <dbReference type="NCBI Taxonomy" id="69319"/>
</organismHost>
<organism>
    <name type="scientific">Microplitis demolitor bracovirus (isolate Webb)</name>
    <name type="common">MdBV</name>
    <dbReference type="NCBI Taxonomy" id="654919"/>
    <lineage>
        <taxon>Viruses</taxon>
        <taxon>Viruses incertae sedis</taxon>
        <taxon>Polydnaviriformidae</taxon>
        <taxon>Bracoviriform</taxon>
        <taxon>Microplitis demolitor bracovirus</taxon>
    </lineage>
</organism>
<accession>Q5I143</accession>
<proteinExistence type="inferred from homology"/>
<reference key="1">
    <citation type="journal article" date="2006" name="Virology">
        <title>Polydnavirus genomes reflect their dual roles as mutualists and pathogens.</title>
        <authorList>
            <person name="Webb B.A."/>
            <person name="Strand M.R."/>
            <person name="Dickey S.E."/>
            <person name="Beck M.H."/>
            <person name="Hilgarth R.S."/>
            <person name="Barney W.E."/>
            <person name="Kadash K."/>
            <person name="Kroemer J.A."/>
            <person name="Lindstrom K.G."/>
            <person name="Rattanadechakul W."/>
            <person name="Shelby K.S."/>
            <person name="Thoetkiattikul H."/>
            <person name="Turnbull M.W."/>
            <person name="Witherell R.A."/>
        </authorList>
    </citation>
    <scope>NUCLEOTIDE SEQUENCE [GENOMIC DNA]</scope>
</reference>
<protein>
    <recommendedName>
        <fullName>Probable tyrosine phosphatase protein H4</fullName>
        <shortName>PTP-H4</shortName>
        <ecNumber>3.1.3.48</ecNumber>
    </recommendedName>
</protein>
<evidence type="ECO:0000255" key="1">
    <source>
        <dbReference type="PROSITE-ProRule" id="PRU00160"/>
    </source>
</evidence>
<evidence type="ECO:0000255" key="2">
    <source>
        <dbReference type="PROSITE-ProRule" id="PRU10044"/>
    </source>
</evidence>
<evidence type="ECO:0000305" key="3"/>
<sequence length="182" mass="21075">MEINKFICSQGPKKNSCEDFWRMVLEQESCIIVSLTETDDEDQVCYEYWVKEEDYELAFGRYVVKTLEIIEESSFTRTRLRLTDVSSDTSREIHHFWYPHWSDYGNPTNPAEILNLISKVNQKRKEMKKTADSQPGPIVVHCSAGIGRTGTFCTIDNALSQLRKEQTVCLPQTVLKIQKSKI</sequence>
<keyword id="KW-0378">Hydrolase</keyword>
<keyword id="KW-0904">Protein phosphatase</keyword>
<keyword id="KW-1185">Reference proteome</keyword>
<gene>
    <name type="primary">H5</name>
</gene>